<reference key="1">
    <citation type="journal article" date="2005" name="BMC Biol.">
        <title>The sequence of rice chromosomes 11 and 12, rich in disease resistance genes and recent gene duplications.</title>
        <authorList>
            <consortium name="The rice chromosomes 11 and 12 sequencing consortia"/>
        </authorList>
    </citation>
    <scope>NUCLEOTIDE SEQUENCE [LARGE SCALE GENOMIC DNA]</scope>
    <source>
        <strain>cv. Nipponbare</strain>
    </source>
</reference>
<reference key="2">
    <citation type="journal article" date="2005" name="Nature">
        <title>The map-based sequence of the rice genome.</title>
        <authorList>
            <consortium name="International rice genome sequencing project (IRGSP)"/>
        </authorList>
    </citation>
    <scope>NUCLEOTIDE SEQUENCE [LARGE SCALE GENOMIC DNA]</scope>
    <source>
        <strain>cv. Nipponbare</strain>
    </source>
</reference>
<reference key="3">
    <citation type="journal article" date="2008" name="Nucleic Acids Res.">
        <title>The rice annotation project database (RAP-DB): 2008 update.</title>
        <authorList>
            <consortium name="The rice annotation project (RAP)"/>
        </authorList>
    </citation>
    <scope>GENOME REANNOTATION</scope>
    <source>
        <strain>cv. Nipponbare</strain>
    </source>
</reference>
<reference key="4">
    <citation type="journal article" date="2013" name="Rice">
        <title>Improvement of the Oryza sativa Nipponbare reference genome using next generation sequence and optical map data.</title>
        <authorList>
            <person name="Kawahara Y."/>
            <person name="de la Bastide M."/>
            <person name="Hamilton J.P."/>
            <person name="Kanamori H."/>
            <person name="McCombie W.R."/>
            <person name="Ouyang S."/>
            <person name="Schwartz D.C."/>
            <person name="Tanaka T."/>
            <person name="Wu J."/>
            <person name="Zhou S."/>
            <person name="Childs K.L."/>
            <person name="Davidson R.M."/>
            <person name="Lin H."/>
            <person name="Quesada-Ocampo L."/>
            <person name="Vaillancourt B."/>
            <person name="Sakai H."/>
            <person name="Lee S.S."/>
            <person name="Kim J."/>
            <person name="Numa H."/>
            <person name="Itoh T."/>
            <person name="Buell C.R."/>
            <person name="Matsumoto T."/>
        </authorList>
    </citation>
    <scope>GENOME REANNOTATION</scope>
    <source>
        <strain>cv. Nipponbare</strain>
    </source>
</reference>
<reference key="5">
    <citation type="journal article" date="2005" name="PLoS Biol.">
        <title>The genomes of Oryza sativa: a history of duplications.</title>
        <authorList>
            <person name="Yu J."/>
            <person name="Wang J."/>
            <person name="Lin W."/>
            <person name="Li S."/>
            <person name="Li H."/>
            <person name="Zhou J."/>
            <person name="Ni P."/>
            <person name="Dong W."/>
            <person name="Hu S."/>
            <person name="Zeng C."/>
            <person name="Zhang J."/>
            <person name="Zhang Y."/>
            <person name="Li R."/>
            <person name="Xu Z."/>
            <person name="Li S."/>
            <person name="Li X."/>
            <person name="Zheng H."/>
            <person name="Cong L."/>
            <person name="Lin L."/>
            <person name="Yin J."/>
            <person name="Geng J."/>
            <person name="Li G."/>
            <person name="Shi J."/>
            <person name="Liu J."/>
            <person name="Lv H."/>
            <person name="Li J."/>
            <person name="Wang J."/>
            <person name="Deng Y."/>
            <person name="Ran L."/>
            <person name="Shi X."/>
            <person name="Wang X."/>
            <person name="Wu Q."/>
            <person name="Li C."/>
            <person name="Ren X."/>
            <person name="Wang J."/>
            <person name="Wang X."/>
            <person name="Li D."/>
            <person name="Liu D."/>
            <person name="Zhang X."/>
            <person name="Ji Z."/>
            <person name="Zhao W."/>
            <person name="Sun Y."/>
            <person name="Zhang Z."/>
            <person name="Bao J."/>
            <person name="Han Y."/>
            <person name="Dong L."/>
            <person name="Ji J."/>
            <person name="Chen P."/>
            <person name="Wu S."/>
            <person name="Liu J."/>
            <person name="Xiao Y."/>
            <person name="Bu D."/>
            <person name="Tan J."/>
            <person name="Yang L."/>
            <person name="Ye C."/>
            <person name="Zhang J."/>
            <person name="Xu J."/>
            <person name="Zhou Y."/>
            <person name="Yu Y."/>
            <person name="Zhang B."/>
            <person name="Zhuang S."/>
            <person name="Wei H."/>
            <person name="Liu B."/>
            <person name="Lei M."/>
            <person name="Yu H."/>
            <person name="Li Y."/>
            <person name="Xu H."/>
            <person name="Wei S."/>
            <person name="He X."/>
            <person name="Fang L."/>
            <person name="Zhang Z."/>
            <person name="Zhang Y."/>
            <person name="Huang X."/>
            <person name="Su Z."/>
            <person name="Tong W."/>
            <person name="Li J."/>
            <person name="Tong Z."/>
            <person name="Li S."/>
            <person name="Ye J."/>
            <person name="Wang L."/>
            <person name="Fang L."/>
            <person name="Lei T."/>
            <person name="Chen C.-S."/>
            <person name="Chen H.-C."/>
            <person name="Xu Z."/>
            <person name="Li H."/>
            <person name="Huang H."/>
            <person name="Zhang F."/>
            <person name="Xu H."/>
            <person name="Li N."/>
            <person name="Zhao C."/>
            <person name="Li S."/>
            <person name="Dong L."/>
            <person name="Huang Y."/>
            <person name="Li L."/>
            <person name="Xi Y."/>
            <person name="Qi Q."/>
            <person name="Li W."/>
            <person name="Zhang B."/>
            <person name="Hu W."/>
            <person name="Zhang Y."/>
            <person name="Tian X."/>
            <person name="Jiao Y."/>
            <person name="Liang X."/>
            <person name="Jin J."/>
            <person name="Gao L."/>
            <person name="Zheng W."/>
            <person name="Hao B."/>
            <person name="Liu S.-M."/>
            <person name="Wang W."/>
            <person name="Yuan L."/>
            <person name="Cao M."/>
            <person name="McDermott J."/>
            <person name="Samudrala R."/>
            <person name="Wang J."/>
            <person name="Wong G.K.-S."/>
            <person name="Yang H."/>
        </authorList>
    </citation>
    <scope>NUCLEOTIDE SEQUENCE [LARGE SCALE GENOMIC DNA]</scope>
    <source>
        <strain>cv. Nipponbare</strain>
    </source>
</reference>
<reference key="6">
    <citation type="submission" date="2006-10" db="EMBL/GenBank/DDBJ databases">
        <title>Oryza sativa full length cDNA.</title>
        <authorList>
            <consortium name="The rice full-length cDNA consortium"/>
        </authorList>
    </citation>
    <scope>NUCLEOTIDE SEQUENCE [LARGE SCALE MRNA]</scope>
    <source>
        <strain>cv. Nipponbare</strain>
    </source>
</reference>
<accession>Q2QUN2</accession>
<accession>B7F9W5</accession>
<accession>B9FJ53</accession>
<accession>Q0IP29</accession>
<protein>
    <recommendedName>
        <fullName>Laccase-24</fullName>
        <ecNumber>1.10.3.2</ecNumber>
    </recommendedName>
    <alternativeName>
        <fullName>Benzenediol:oxygen oxidoreductase 24</fullName>
    </alternativeName>
    <alternativeName>
        <fullName>Diphenol oxidase 24</fullName>
    </alternativeName>
    <alternativeName>
        <fullName>Urishiol oxidase 24</fullName>
    </alternativeName>
</protein>
<gene>
    <name type="primary">LAC24</name>
    <name type="ordered locus">Os12g0258700</name>
    <name type="ordered locus">LOC_Os12g15680</name>
    <name type="ORF">OsJ_016843</name>
    <name type="ORF">OsJ_17624</name>
</gene>
<comment type="function">
    <text evidence="1">Lignin degradation and detoxification of lignin-derived products.</text>
</comment>
<comment type="catalytic activity">
    <reaction>
        <text>4 hydroquinone + O2 = 4 benzosemiquinone + 2 H2O</text>
        <dbReference type="Rhea" id="RHEA:11276"/>
        <dbReference type="ChEBI" id="CHEBI:15377"/>
        <dbReference type="ChEBI" id="CHEBI:15379"/>
        <dbReference type="ChEBI" id="CHEBI:17594"/>
        <dbReference type="ChEBI" id="CHEBI:17977"/>
        <dbReference type="EC" id="1.10.3.2"/>
    </reaction>
</comment>
<comment type="cofactor">
    <cofactor evidence="1">
        <name>Cu cation</name>
        <dbReference type="ChEBI" id="CHEBI:23378"/>
    </cofactor>
    <text evidence="1">Binds 4 Cu cations per monomer.</text>
</comment>
<comment type="subcellular location">
    <subcellularLocation>
        <location evidence="3">Secreted</location>
        <location evidence="3">Extracellular space</location>
        <location evidence="3">Apoplast</location>
    </subcellularLocation>
</comment>
<comment type="similarity">
    <text evidence="3">Belongs to the multicopper oxidase family.</text>
</comment>
<comment type="sequence caution" evidence="3">
    <conflict type="erroneous initiation">
        <sequence resource="EMBL-CDS" id="BAH01413"/>
    </conflict>
    <text>Extended N-terminus.</text>
</comment>
<proteinExistence type="evidence at transcript level"/>
<name>LAC24_ORYSJ</name>
<keyword id="KW-0052">Apoplast</keyword>
<keyword id="KW-0186">Copper</keyword>
<keyword id="KW-0325">Glycoprotein</keyword>
<keyword id="KW-0439">Lignin degradation</keyword>
<keyword id="KW-0479">Metal-binding</keyword>
<keyword id="KW-0560">Oxidoreductase</keyword>
<keyword id="KW-1185">Reference proteome</keyword>
<keyword id="KW-0677">Repeat</keyword>
<keyword id="KW-0964">Secreted</keyword>
<keyword id="KW-0732">Signal</keyword>
<feature type="signal peptide" evidence="2">
    <location>
        <begin position="1"/>
        <end position="23"/>
    </location>
</feature>
<feature type="chain" id="PRO_0000291911" description="Laccase-24">
    <location>
        <begin position="24"/>
        <end position="579"/>
    </location>
</feature>
<feature type="domain" description="Plastocyanin-like 1">
    <location>
        <begin position="31"/>
        <end position="148"/>
    </location>
</feature>
<feature type="domain" description="Plastocyanin-like 2">
    <location>
        <begin position="159"/>
        <end position="322"/>
    </location>
</feature>
<feature type="domain" description="Plastocyanin-like 3">
    <location>
        <begin position="425"/>
        <end position="563"/>
    </location>
</feature>
<feature type="binding site" evidence="1">
    <location>
        <position position="82"/>
    </location>
    <ligand>
        <name>Cu cation</name>
        <dbReference type="ChEBI" id="CHEBI:23378"/>
        <label>1</label>
    </ligand>
</feature>
<feature type="binding site" evidence="1">
    <location>
        <position position="84"/>
    </location>
    <ligand>
        <name>Cu cation</name>
        <dbReference type="ChEBI" id="CHEBI:23378"/>
        <label>2</label>
    </ligand>
</feature>
<feature type="binding site" evidence="1">
    <location>
        <position position="127"/>
    </location>
    <ligand>
        <name>Cu cation</name>
        <dbReference type="ChEBI" id="CHEBI:23378"/>
        <label>2</label>
    </ligand>
</feature>
<feature type="binding site" evidence="1">
    <location>
        <position position="129"/>
    </location>
    <ligand>
        <name>Cu cation</name>
        <dbReference type="ChEBI" id="CHEBI:23378"/>
        <label>3</label>
    </ligand>
</feature>
<feature type="binding site" evidence="1">
    <location>
        <position position="480"/>
    </location>
    <ligand>
        <name>Cu cation</name>
        <dbReference type="ChEBI" id="CHEBI:23378"/>
        <label>4</label>
    </ligand>
</feature>
<feature type="binding site" evidence="1">
    <location>
        <position position="483"/>
    </location>
    <ligand>
        <name>Cu cation</name>
        <dbReference type="ChEBI" id="CHEBI:23378"/>
        <label>1</label>
    </ligand>
</feature>
<feature type="binding site" evidence="1">
    <location>
        <position position="485"/>
    </location>
    <ligand>
        <name>Cu cation</name>
        <dbReference type="ChEBI" id="CHEBI:23378"/>
        <label>3</label>
    </ligand>
</feature>
<feature type="binding site" evidence="1">
    <location>
        <position position="542"/>
    </location>
    <ligand>
        <name>Cu cation</name>
        <dbReference type="ChEBI" id="CHEBI:23378"/>
        <label>3</label>
    </ligand>
</feature>
<feature type="binding site" evidence="1">
    <location>
        <position position="543"/>
    </location>
    <ligand>
        <name>Cu cation</name>
        <dbReference type="ChEBI" id="CHEBI:23378"/>
        <label>4</label>
    </ligand>
</feature>
<feature type="binding site" evidence="1">
    <location>
        <position position="544"/>
    </location>
    <ligand>
        <name>Cu cation</name>
        <dbReference type="ChEBI" id="CHEBI:23378"/>
        <label>2</label>
    </ligand>
</feature>
<feature type="binding site" evidence="1">
    <location>
        <position position="548"/>
    </location>
    <ligand>
        <name>Cu cation</name>
        <dbReference type="ChEBI" id="CHEBI:23378"/>
        <label>4</label>
    </ligand>
</feature>
<feature type="glycosylation site" description="N-linked (GlcNAc...) asparagine" evidence="2">
    <location>
        <position position="34"/>
    </location>
</feature>
<feature type="glycosylation site" description="N-linked (GlcNAc...) asparagine" evidence="2">
    <location>
        <position position="78"/>
    </location>
</feature>
<feature type="glycosylation site" description="N-linked (GlcNAc...) asparagine" evidence="2">
    <location>
        <position position="110"/>
    </location>
</feature>
<feature type="glycosylation site" description="N-linked (GlcNAc...) asparagine" evidence="2">
    <location>
        <position position="116"/>
    </location>
</feature>
<feature type="glycosylation site" description="N-linked (GlcNAc...) asparagine" evidence="2">
    <location>
        <position position="204"/>
    </location>
</feature>
<feature type="glycosylation site" description="N-linked (GlcNAc...) asparagine" evidence="2">
    <location>
        <position position="209"/>
    </location>
</feature>
<feature type="glycosylation site" description="N-linked (GlcNAc...) asparagine" evidence="2">
    <location>
        <position position="219"/>
    </location>
</feature>
<feature type="glycosylation site" description="N-linked (GlcNAc...) asparagine" evidence="2">
    <location>
        <position position="241"/>
    </location>
</feature>
<feature type="glycosylation site" description="N-linked (GlcNAc...) asparagine" evidence="2">
    <location>
        <position position="312"/>
    </location>
</feature>
<feature type="glycosylation site" description="N-linked (GlcNAc...) asparagine" evidence="2">
    <location>
        <position position="337"/>
    </location>
</feature>
<feature type="glycosylation site" description="N-linked (GlcNAc...) asparagine" evidence="2">
    <location>
        <position position="348"/>
    </location>
</feature>
<feature type="glycosylation site" description="N-linked (GlcNAc...) asparagine" evidence="2">
    <location>
        <position position="398"/>
    </location>
</feature>
<feature type="glycosylation site" description="N-linked (GlcNAc...) asparagine" evidence="2">
    <location>
        <position position="405"/>
    </location>
</feature>
<feature type="glycosylation site" description="N-linked (GlcNAc...) asparagine" evidence="2">
    <location>
        <position position="444"/>
    </location>
</feature>
<feature type="glycosylation site" description="N-linked (GlcNAc...) asparagine" evidence="2">
    <location>
        <position position="462"/>
    </location>
</feature>
<feature type="glycosylation site" description="N-linked (GlcNAc...) asparagine" evidence="2">
    <location>
        <position position="500"/>
    </location>
</feature>
<organism>
    <name type="scientific">Oryza sativa subsp. japonica</name>
    <name type="common">Rice</name>
    <dbReference type="NCBI Taxonomy" id="39947"/>
    <lineage>
        <taxon>Eukaryota</taxon>
        <taxon>Viridiplantae</taxon>
        <taxon>Streptophyta</taxon>
        <taxon>Embryophyta</taxon>
        <taxon>Tracheophyta</taxon>
        <taxon>Spermatophyta</taxon>
        <taxon>Magnoliopsida</taxon>
        <taxon>Liliopsida</taxon>
        <taxon>Poales</taxon>
        <taxon>Poaceae</taxon>
        <taxon>BOP clade</taxon>
        <taxon>Oryzoideae</taxon>
        <taxon>Oryzeae</taxon>
        <taxon>Oryzinae</taxon>
        <taxon>Oryza</taxon>
        <taxon>Oryza sativa</taxon>
    </lineage>
</organism>
<sequence length="579" mass="63459">MARSWSLLLLPFALALVASVAQAAVVEYTFNVGNLSISQLCQQEMIITAVNGQLPGPTIVATEGDTVVVHMVNESPYNMTIHWHGIFQRGTPWADGPAMVTQCPVRPGGNYTYRFNVTGQEGTLWWHSHFSFLRATVYGALIIKPRGGAKAYPFPVPDEEVVVILGEWWKTNVYDLQQRSLVTGNPAPHADAYTINGKPGDFYNCSAPNQTHKFELKQNKTYMLRIINAALNTPLFFKVANHSFNVVAADACYTKPYKTDVVVISPGQTVDALLVPDAGVAAAVGGRYYMAVIPYNSAVNAADPSFLYSLTNSTAIVEYGGGPATSPPMVPDMPEYNDTATAHRFLSNMTALVPNRVPLAVDTHMFVTVSMGDTFCGPEQTMCMPDDKGTIFASSMNNASFILPNTTSMLEAMYKGSIDGVYTRDFPDTPPIVFDYTADASDDNATLKHTFKSTKVKTLKYNSTVQMVLQNTRLVSKESHPMHLHGFNFFVLAQGFGNYNETTDPAKFNLVDPQERNTVAVPTGGWAVIRFVADNPGVWFMHCHFDAHLEFGLGMVFEVQNGPTQETSLPPPPSDLPQC</sequence>
<evidence type="ECO:0000250" key="1"/>
<evidence type="ECO:0000255" key="2"/>
<evidence type="ECO:0000305" key="3"/>
<dbReference type="EC" id="1.10.3.2"/>
<dbReference type="EMBL" id="DP000011">
    <property type="protein sequence ID" value="ABA97304.1"/>
    <property type="molecule type" value="Genomic_DNA"/>
</dbReference>
<dbReference type="EMBL" id="AP008218">
    <property type="protein sequence ID" value="BAF29536.2"/>
    <property type="molecule type" value="Genomic_DNA"/>
</dbReference>
<dbReference type="EMBL" id="AP014968">
    <property type="status" value="NOT_ANNOTATED_CDS"/>
    <property type="molecule type" value="Genomic_DNA"/>
</dbReference>
<dbReference type="EMBL" id="CM000142">
    <property type="protein sequence ID" value="EEE62821.1"/>
    <property type="molecule type" value="Genomic_DNA"/>
</dbReference>
<dbReference type="EMBL" id="AK243030">
    <property type="protein sequence ID" value="BAH01413.1"/>
    <property type="status" value="ALT_INIT"/>
    <property type="molecule type" value="mRNA"/>
</dbReference>
<dbReference type="RefSeq" id="XP_015618619.1">
    <property type="nucleotide sequence ID" value="XM_015763133.1"/>
</dbReference>
<dbReference type="SMR" id="Q2QUN2"/>
<dbReference type="FunCoup" id="Q2QUN2">
    <property type="interactions" value="19"/>
</dbReference>
<dbReference type="STRING" id="39947.Q2QUN2"/>
<dbReference type="GlyCosmos" id="Q2QUN2">
    <property type="glycosylation" value="16 sites, No reported glycans"/>
</dbReference>
<dbReference type="PaxDb" id="39947-Q2QUN2"/>
<dbReference type="KEGG" id="dosa:Os12g0258700"/>
<dbReference type="eggNOG" id="KOG1263">
    <property type="taxonomic scope" value="Eukaryota"/>
</dbReference>
<dbReference type="HOGENOM" id="CLU_006504_6_3_1"/>
<dbReference type="InParanoid" id="Q2QUN2"/>
<dbReference type="OrthoDB" id="2121828at2759"/>
<dbReference type="Proteomes" id="UP000000763">
    <property type="component" value="Chromosome 12"/>
</dbReference>
<dbReference type="Proteomes" id="UP000007752">
    <property type="component" value="Chromosome 5"/>
</dbReference>
<dbReference type="Proteomes" id="UP000059680">
    <property type="component" value="Chromosome 12"/>
</dbReference>
<dbReference type="GO" id="GO:0048046">
    <property type="term" value="C:apoplast"/>
    <property type="evidence" value="ECO:0007669"/>
    <property type="project" value="UniProtKB-SubCell"/>
</dbReference>
<dbReference type="GO" id="GO:0005507">
    <property type="term" value="F:copper ion binding"/>
    <property type="evidence" value="ECO:0007669"/>
    <property type="project" value="InterPro"/>
</dbReference>
<dbReference type="GO" id="GO:0052716">
    <property type="term" value="F:hydroquinone:oxygen oxidoreductase activity"/>
    <property type="evidence" value="ECO:0007669"/>
    <property type="project" value="UniProtKB-EC"/>
</dbReference>
<dbReference type="GO" id="GO:0016491">
    <property type="term" value="F:oxidoreductase activity"/>
    <property type="evidence" value="ECO:0000318"/>
    <property type="project" value="GO_Central"/>
</dbReference>
<dbReference type="GO" id="GO:0046274">
    <property type="term" value="P:lignin catabolic process"/>
    <property type="evidence" value="ECO:0007669"/>
    <property type="project" value="UniProtKB-KW"/>
</dbReference>
<dbReference type="CDD" id="cd13849">
    <property type="entry name" value="CuRO_1_LCC_plant"/>
    <property type="match status" value="1"/>
</dbReference>
<dbReference type="CDD" id="cd13875">
    <property type="entry name" value="CuRO_2_LCC_plant"/>
    <property type="match status" value="1"/>
</dbReference>
<dbReference type="CDD" id="cd13897">
    <property type="entry name" value="CuRO_3_LCC_plant"/>
    <property type="match status" value="1"/>
</dbReference>
<dbReference type="Gene3D" id="2.60.40.420">
    <property type="entry name" value="Cupredoxins - blue copper proteins"/>
    <property type="match status" value="3"/>
</dbReference>
<dbReference type="InterPro" id="IPR011707">
    <property type="entry name" value="Cu-oxidase-like_N"/>
</dbReference>
<dbReference type="InterPro" id="IPR001117">
    <property type="entry name" value="Cu-oxidase_2nd"/>
</dbReference>
<dbReference type="InterPro" id="IPR011706">
    <property type="entry name" value="Cu-oxidase_C"/>
</dbReference>
<dbReference type="InterPro" id="IPR045087">
    <property type="entry name" value="Cu-oxidase_fam"/>
</dbReference>
<dbReference type="InterPro" id="IPR002355">
    <property type="entry name" value="Cu_oxidase_Cu_BS"/>
</dbReference>
<dbReference type="InterPro" id="IPR008972">
    <property type="entry name" value="Cupredoxin"/>
</dbReference>
<dbReference type="InterPro" id="IPR034288">
    <property type="entry name" value="CuRO_1_LCC"/>
</dbReference>
<dbReference type="InterPro" id="IPR034285">
    <property type="entry name" value="CuRO_2_LCC"/>
</dbReference>
<dbReference type="InterPro" id="IPR034289">
    <property type="entry name" value="CuRO_3_LCC"/>
</dbReference>
<dbReference type="InterPro" id="IPR017761">
    <property type="entry name" value="Laccase"/>
</dbReference>
<dbReference type="NCBIfam" id="TIGR03389">
    <property type="entry name" value="laccase"/>
    <property type="match status" value="1"/>
</dbReference>
<dbReference type="PANTHER" id="PTHR11709:SF439">
    <property type="entry name" value="LACCASE-24"/>
    <property type="match status" value="1"/>
</dbReference>
<dbReference type="PANTHER" id="PTHR11709">
    <property type="entry name" value="MULTI-COPPER OXIDASE"/>
    <property type="match status" value="1"/>
</dbReference>
<dbReference type="Pfam" id="PF00394">
    <property type="entry name" value="Cu-oxidase"/>
    <property type="match status" value="1"/>
</dbReference>
<dbReference type="Pfam" id="PF07731">
    <property type="entry name" value="Cu-oxidase_2"/>
    <property type="match status" value="1"/>
</dbReference>
<dbReference type="Pfam" id="PF07732">
    <property type="entry name" value="Cu-oxidase_3"/>
    <property type="match status" value="1"/>
</dbReference>
<dbReference type="SUPFAM" id="SSF49503">
    <property type="entry name" value="Cupredoxins"/>
    <property type="match status" value="3"/>
</dbReference>
<dbReference type="PROSITE" id="PS00080">
    <property type="entry name" value="MULTICOPPER_OXIDASE2"/>
    <property type="match status" value="1"/>
</dbReference>